<feature type="chain" id="PRO_0000454372" description="Germ cell nuclear acidic protein">
    <location>
        <begin position="1"/>
        <end position="507"/>
    </location>
</feature>
<feature type="region of interest" description="Disordered" evidence="2">
    <location>
        <begin position="1"/>
        <end position="507"/>
    </location>
</feature>
<feature type="short sequence motif" description="SUMO interaction motif 1 (SIM)" evidence="1">
    <location>
        <begin position="12"/>
        <end position="15"/>
    </location>
</feature>
<feature type="short sequence motif" description="SUMO interaction motif 1 (SIM)" evidence="1">
    <location>
        <begin position="66"/>
        <end position="69"/>
    </location>
</feature>
<feature type="short sequence motif" description="SUMO interaction motif 1 (SIM)" evidence="1">
    <location>
        <begin position="86"/>
        <end position="89"/>
    </location>
</feature>
<feature type="short sequence motif" description="SUMO interaction motif 1 (SIM)" evidence="1">
    <location>
        <begin position="108"/>
        <end position="111"/>
    </location>
</feature>
<feature type="compositionally biased region" description="Low complexity" evidence="2">
    <location>
        <begin position="1"/>
        <end position="51"/>
    </location>
</feature>
<feature type="compositionally biased region" description="Basic and acidic residues" evidence="2">
    <location>
        <begin position="122"/>
        <end position="141"/>
    </location>
</feature>
<feature type="compositionally biased region" description="Basic and acidic residues" evidence="2">
    <location>
        <begin position="179"/>
        <end position="354"/>
    </location>
</feature>
<feature type="compositionally biased region" description="Basic and acidic residues" evidence="2">
    <location>
        <begin position="431"/>
        <end position="449"/>
    </location>
</feature>
<feature type="compositionally biased region" description="Basic residues" evidence="2">
    <location>
        <begin position="480"/>
        <end position="507"/>
    </location>
</feature>
<protein>
    <recommendedName>
        <fullName evidence="6">Germ cell nuclear acidic protein</fullName>
    </recommendedName>
    <alternativeName>
        <fullName evidence="1">Acidic repeat-containing protein</fullName>
    </alternativeName>
    <alternativeName>
        <fullName evidence="5">Germ cell nuclear antigen</fullName>
    </alternativeName>
</protein>
<comment type="function">
    <text evidence="4">May play a role in DNA-protein cross-links (DPCs) clearance through a SUMO-dependent recruitment to sites of DPCs, ensuring the genomic stability by protecting germ cells and early embryos from various sources of damage (PubMed:31839538). Can resolve the topoisomerase II (TOP2A) DPCs (PubMed:31839538).</text>
</comment>
<comment type="subunit">
    <text evidence="1 4">Interacts (via SIM domains) with SUMO2; this interaction allows the GCNA recruitment to DPCs sites (By similarity). Interacts with TOP2A; this interaction allows the resolution of topoisomerase II (TOP2A) DNA-protein cross-links (PubMed:31839538).</text>
</comment>
<comment type="subcellular location">
    <subcellularLocation>
        <location evidence="4">Chromosome</location>
    </subcellularLocation>
    <subcellularLocation>
        <location evidence="4">Nucleus</location>
        <location evidence="4">PML body</location>
    </subcellularLocation>
    <subcellularLocation>
        <location evidence="3">Nucleus</location>
    </subcellularLocation>
    <text evidence="1 4">Co-localizes with SUMO2 at PML bodies in all interphase cells (By similarity). Localizes on condensed chromosomes in spermatocytes in G2 and M during meiotic prophase (PubMed:31839538).</text>
</comment>
<comment type="tissue specificity">
    <text evidence="3">Germ-cells specific.</text>
</comment>
<comment type="domain">
    <text evidence="1">SUMO interaction motif 1 (SIM) mediates the binding to polysumoylated substrates.</text>
</comment>
<comment type="disruption phenotype">
    <text evidence="3 4">Mutant male mice are sterile and spermatocytes exhibit DNA damage, crossover defects, and chromatin condensation abnormalities.</text>
</comment>
<comment type="similarity">
    <text evidence="6">Belongs to the serine-aspartate repeat-containing protein (SDr) family.</text>
</comment>
<keyword id="KW-0158">Chromosome</keyword>
<keyword id="KW-0539">Nucleus</keyword>
<keyword id="KW-1185">Reference proteome</keyword>
<evidence type="ECO:0000250" key="1">
    <source>
        <dbReference type="UniProtKB" id="Q96QF7"/>
    </source>
</evidence>
<evidence type="ECO:0000256" key="2">
    <source>
        <dbReference type="SAM" id="MobiDB-lite"/>
    </source>
</evidence>
<evidence type="ECO:0000269" key="3">
    <source>
    </source>
</evidence>
<evidence type="ECO:0000269" key="4">
    <source>
    </source>
</evidence>
<evidence type="ECO:0000303" key="5">
    <source>
    </source>
</evidence>
<evidence type="ECO:0000305" key="6"/>
<evidence type="ECO:0000312" key="7">
    <source>
        <dbReference type="MGI" id="MGI:105113"/>
    </source>
</evidence>
<name>GCNA_MOUSE</name>
<proteinExistence type="evidence at protein level"/>
<reference key="1">
    <citation type="journal article" date="2016" name="Elife">
        <title>A widely employed germ cell marker is an ancient disordered protein with reproductive functions in diverse eukaryotes.</title>
        <authorList>
            <person name="Carmell M.A."/>
            <person name="Dokshin G.A."/>
            <person name="Skaletsky H."/>
            <person name="Hu Y.C."/>
            <person name="van Wolfswinkel J.C."/>
            <person name="Igarashi K.J."/>
            <person name="Bellott D.W."/>
            <person name="Nefedov M."/>
            <person name="Reddien P.W."/>
            <person name="Enders G.C."/>
            <person name="Uversky V.N."/>
            <person name="Mello C.C."/>
            <person name="Page D.C."/>
        </authorList>
    </citation>
    <scope>NUCLEOTIDE SEQUENCE [MRNA]</scope>
    <scope>SUBCELLULAR LOCATION</scope>
    <scope>TISSUE SPECIFICITY</scope>
    <scope>DISRUPTION PHENOTYPE</scope>
    <source>
        <strain>C57BL/6J</strain>
    </source>
</reference>
<reference key="2">
    <citation type="journal article" date="2009" name="PLoS Biol.">
        <title>Lineage-specific biology revealed by a finished genome assembly of the mouse.</title>
        <authorList>
            <person name="Church D.M."/>
            <person name="Goodstadt L."/>
            <person name="Hillier L.W."/>
            <person name="Zody M.C."/>
            <person name="Goldstein S."/>
            <person name="She X."/>
            <person name="Bult C.J."/>
            <person name="Agarwala R."/>
            <person name="Cherry J.L."/>
            <person name="DiCuccio M."/>
            <person name="Hlavina W."/>
            <person name="Kapustin Y."/>
            <person name="Meric P."/>
            <person name="Maglott D."/>
            <person name="Birtle Z."/>
            <person name="Marques A.C."/>
            <person name="Graves T."/>
            <person name="Zhou S."/>
            <person name="Teague B."/>
            <person name="Potamousis K."/>
            <person name="Churas C."/>
            <person name="Place M."/>
            <person name="Herschleb J."/>
            <person name="Runnheim R."/>
            <person name="Forrest D."/>
            <person name="Amos-Landgraf J."/>
            <person name="Schwartz D.C."/>
            <person name="Cheng Z."/>
            <person name="Lindblad-Toh K."/>
            <person name="Eichler E.E."/>
            <person name="Ponting C.P."/>
        </authorList>
    </citation>
    <scope>NUCLEOTIDE SEQUENCE [LARGE SCALE GENOMIC DNA]</scope>
    <source>
        <strain>C57BL/6J</strain>
    </source>
</reference>
<reference key="3">
    <citation type="journal article" date="2020" name="Dev. Cell">
        <title>GCNA Interacts with Spartan and Topoisomerase II to Regulate Genome Stability.</title>
        <authorList>
            <person name="Dokshin G.A."/>
            <person name="Davis G.M."/>
            <person name="Sawle A.D."/>
            <person name="Eldridge M.D."/>
            <person name="Nicholls P.K."/>
            <person name="Gourley T.E."/>
            <person name="Romer K.A."/>
            <person name="Molesworth L.W."/>
            <person name="Tatnell H.R."/>
            <person name="Ozturk A.R."/>
            <person name="de Rooij D.G."/>
            <person name="Hannon G.J."/>
            <person name="Page D.C."/>
            <person name="Mello C.C."/>
            <person name="Carmell M.A."/>
        </authorList>
    </citation>
    <scope>SUBCELLULAR LOCATION</scope>
    <scope>INTERACTION WITH TOP2A</scope>
    <scope>DISRUPTION PHENOTYPE</scope>
    <scope>FUNCTION</scope>
</reference>
<accession>A0A1D9BZF0</accession>
<gene>
    <name evidence="7" type="primary">Gcna</name>
</gene>
<organism>
    <name type="scientific">Mus musculus</name>
    <name type="common">Mouse</name>
    <dbReference type="NCBI Taxonomy" id="10090"/>
    <lineage>
        <taxon>Eukaryota</taxon>
        <taxon>Metazoa</taxon>
        <taxon>Chordata</taxon>
        <taxon>Craniata</taxon>
        <taxon>Vertebrata</taxon>
        <taxon>Euteleostomi</taxon>
        <taxon>Mammalia</taxon>
        <taxon>Eutheria</taxon>
        <taxon>Euarchontoglires</taxon>
        <taxon>Glires</taxon>
        <taxon>Rodentia</taxon>
        <taxon>Myomorpha</taxon>
        <taxon>Muroidea</taxon>
        <taxon>Muridae</taxon>
        <taxon>Murinae</taxon>
        <taxon>Mus</taxon>
        <taxon>Mus</taxon>
    </lineage>
</organism>
<dbReference type="EMBL" id="KX981576">
    <property type="protein sequence ID" value="AOY07794.1"/>
    <property type="molecule type" value="mRNA"/>
</dbReference>
<dbReference type="EMBL" id="AL805980">
    <property type="status" value="NOT_ANNOTATED_CDS"/>
    <property type="molecule type" value="Genomic_DNA"/>
</dbReference>
<dbReference type="RefSeq" id="NP_001369163.1">
    <property type="nucleotide sequence ID" value="NM_001382234.1"/>
</dbReference>
<dbReference type="FunCoup" id="A0A1D9BZF0">
    <property type="interactions" value="8"/>
</dbReference>
<dbReference type="GeneID" id="115489118"/>
<dbReference type="AGR" id="MGI:105113"/>
<dbReference type="MGI" id="MGI:105113">
    <property type="gene designation" value="Gcna"/>
</dbReference>
<dbReference type="InParanoid" id="A0A1D9BZF0"/>
<dbReference type="OrthoDB" id="9635128at2759"/>
<dbReference type="PRO" id="PR:A0A1D9BZF0"/>
<dbReference type="Proteomes" id="UP000000589">
    <property type="component" value="Unplaced"/>
</dbReference>
<dbReference type="GO" id="GO:0000793">
    <property type="term" value="C:condensed chromosome"/>
    <property type="evidence" value="ECO:0000314"/>
    <property type="project" value="UniProtKB"/>
</dbReference>
<dbReference type="GO" id="GO:0016605">
    <property type="term" value="C:PML body"/>
    <property type="evidence" value="ECO:0000314"/>
    <property type="project" value="UniProtKB"/>
</dbReference>
<dbReference type="GO" id="GO:0006974">
    <property type="term" value="P:DNA damage response"/>
    <property type="evidence" value="ECO:0000315"/>
    <property type="project" value="MGI"/>
</dbReference>
<dbReference type="GO" id="GO:0031570">
    <property type="term" value="P:DNA integrity checkpoint signaling"/>
    <property type="evidence" value="ECO:0000315"/>
    <property type="project" value="MGI"/>
</dbReference>
<dbReference type="GO" id="GO:0007129">
    <property type="term" value="P:homologous chromosome pairing at meiosis"/>
    <property type="evidence" value="ECO:0000315"/>
    <property type="project" value="MGI"/>
</dbReference>
<dbReference type="GO" id="GO:0035825">
    <property type="term" value="P:homologous recombination"/>
    <property type="evidence" value="ECO:0000315"/>
    <property type="project" value="MGI"/>
</dbReference>
<dbReference type="GO" id="GO:0010032">
    <property type="term" value="P:meiotic chromosome condensation"/>
    <property type="evidence" value="ECO:0000315"/>
    <property type="project" value="MGI"/>
</dbReference>
<dbReference type="GO" id="GO:0106300">
    <property type="term" value="P:protein-DNA covalent cross-linking repair"/>
    <property type="evidence" value="ECO:0000315"/>
    <property type="project" value="UniProtKB"/>
</dbReference>
<dbReference type="InterPro" id="IPR050972">
    <property type="entry name" value="SDr-like"/>
</dbReference>
<dbReference type="PANTHER" id="PTHR34403:SF17">
    <property type="entry name" value="RETINITIS PIGMENTOSA 1-LIKE 1 PROTEIN-LIKE"/>
    <property type="match status" value="1"/>
</dbReference>
<dbReference type="PANTHER" id="PTHR34403">
    <property type="entry name" value="TOL-PAL SYSTEM PROTEIN TOLA"/>
    <property type="match status" value="1"/>
</dbReference>
<sequence length="507" mass="53394">MDSGSSSSSSSSGSSSGSCSTSGSGSTSGSSTTSSSSSSSSSSSSSSSSSSKEYMPELPKQRKASCVVIDSESDSDNTSDEKNTTVCEISSGDETSDIDRPGGQKLPLIVIDDDDDGSPDLKNTKQKSDEPQMSVLEKEGVECIGSDSTSPHDVCEIWDVCGSSNQTSSELEPEGEPESEAKGEPESEAKGEPESEAKGEPESEAKGESESEAKGEMETEAKGESESEAKGEMETEAKGESESEAKGEMETEAKGEPESEAKGEMETEAKGEPESEAKGEMETEAKGESESEAKGEMETEAKGESESEAKGEMETEAKGEPESEAKGEMETEAKGEPESEAKGEPEPEAAKGEMETEAAMGEVETEAAMGEPEQEITAEEAKKKRAAYLLAQQRKRKRKNRFICMSSSKPRRKRRRADPQDGADPQDGADPQDRADPQDLADPQDRGDSQDMPSLPGTSDEPIPSGQPVCPRKGMASSRGRGRGRGRGRGRGRGRGRGRGRGAKAGK</sequence>